<organism>
    <name type="scientific">Treponema pallidum (strain Nichols)</name>
    <dbReference type="NCBI Taxonomy" id="243276"/>
    <lineage>
        <taxon>Bacteria</taxon>
        <taxon>Pseudomonadati</taxon>
        <taxon>Spirochaetota</taxon>
        <taxon>Spirochaetia</taxon>
        <taxon>Spirochaetales</taxon>
        <taxon>Treponemataceae</taxon>
        <taxon>Treponema</taxon>
    </lineage>
</organism>
<keyword id="KW-1185">Reference proteome</keyword>
<keyword id="KW-0687">Ribonucleoprotein</keyword>
<keyword id="KW-0689">Ribosomal protein</keyword>
<accession>O83218</accession>
<dbReference type="EMBL" id="AE000520">
    <property type="protein sequence ID" value="AAC65173.1"/>
    <property type="molecule type" value="Genomic_DNA"/>
</dbReference>
<dbReference type="PIR" id="F71354">
    <property type="entry name" value="F71354"/>
</dbReference>
<dbReference type="RefSeq" id="WP_010881635.1">
    <property type="nucleotide sequence ID" value="NC_021490.2"/>
</dbReference>
<dbReference type="SMR" id="O83218"/>
<dbReference type="IntAct" id="O83218">
    <property type="interactions" value="5"/>
</dbReference>
<dbReference type="STRING" id="243276.TP_0188"/>
<dbReference type="EnsemblBacteria" id="AAC65173">
    <property type="protein sequence ID" value="AAC65173"/>
    <property type="gene ID" value="TP_0188"/>
</dbReference>
<dbReference type="GeneID" id="93875976"/>
<dbReference type="KEGG" id="tpa:TP_0188"/>
<dbReference type="KEGG" id="tpw:TPANIC_0188"/>
<dbReference type="eggNOG" id="COG0051">
    <property type="taxonomic scope" value="Bacteria"/>
</dbReference>
<dbReference type="HOGENOM" id="CLU_122625_1_3_12"/>
<dbReference type="OrthoDB" id="9804464at2"/>
<dbReference type="Proteomes" id="UP000000811">
    <property type="component" value="Chromosome"/>
</dbReference>
<dbReference type="GO" id="GO:1990904">
    <property type="term" value="C:ribonucleoprotein complex"/>
    <property type="evidence" value="ECO:0007669"/>
    <property type="project" value="UniProtKB-KW"/>
</dbReference>
<dbReference type="GO" id="GO:0005840">
    <property type="term" value="C:ribosome"/>
    <property type="evidence" value="ECO:0007669"/>
    <property type="project" value="UniProtKB-KW"/>
</dbReference>
<dbReference type="GO" id="GO:0003735">
    <property type="term" value="F:structural constituent of ribosome"/>
    <property type="evidence" value="ECO:0007669"/>
    <property type="project" value="InterPro"/>
</dbReference>
<dbReference type="GO" id="GO:0000049">
    <property type="term" value="F:tRNA binding"/>
    <property type="evidence" value="ECO:0007669"/>
    <property type="project" value="UniProtKB-UniRule"/>
</dbReference>
<dbReference type="GO" id="GO:0006412">
    <property type="term" value="P:translation"/>
    <property type="evidence" value="ECO:0007669"/>
    <property type="project" value="UniProtKB-UniRule"/>
</dbReference>
<dbReference type="FunFam" id="3.30.70.600:FF:000003">
    <property type="entry name" value="30S ribosomal protein S10"/>
    <property type="match status" value="1"/>
</dbReference>
<dbReference type="Gene3D" id="3.30.70.600">
    <property type="entry name" value="Ribosomal protein S10 domain"/>
    <property type="match status" value="1"/>
</dbReference>
<dbReference type="HAMAP" id="MF_00508">
    <property type="entry name" value="Ribosomal_uS10"/>
    <property type="match status" value="1"/>
</dbReference>
<dbReference type="InterPro" id="IPR001848">
    <property type="entry name" value="Ribosomal_uS10"/>
</dbReference>
<dbReference type="InterPro" id="IPR018268">
    <property type="entry name" value="Ribosomal_uS10_CS"/>
</dbReference>
<dbReference type="InterPro" id="IPR027486">
    <property type="entry name" value="Ribosomal_uS10_dom"/>
</dbReference>
<dbReference type="InterPro" id="IPR036838">
    <property type="entry name" value="Ribosomal_uS10_dom_sf"/>
</dbReference>
<dbReference type="NCBIfam" id="NF001861">
    <property type="entry name" value="PRK00596.1"/>
    <property type="match status" value="1"/>
</dbReference>
<dbReference type="NCBIfam" id="TIGR01049">
    <property type="entry name" value="rpsJ_bact"/>
    <property type="match status" value="1"/>
</dbReference>
<dbReference type="PANTHER" id="PTHR11700">
    <property type="entry name" value="30S RIBOSOMAL PROTEIN S10 FAMILY MEMBER"/>
    <property type="match status" value="1"/>
</dbReference>
<dbReference type="Pfam" id="PF00338">
    <property type="entry name" value="Ribosomal_S10"/>
    <property type="match status" value="1"/>
</dbReference>
<dbReference type="PRINTS" id="PR00971">
    <property type="entry name" value="RIBOSOMALS10"/>
</dbReference>
<dbReference type="SMART" id="SM01403">
    <property type="entry name" value="Ribosomal_S10"/>
    <property type="match status" value="1"/>
</dbReference>
<dbReference type="SUPFAM" id="SSF54999">
    <property type="entry name" value="Ribosomal protein S10"/>
    <property type="match status" value="1"/>
</dbReference>
<dbReference type="PROSITE" id="PS00361">
    <property type="entry name" value="RIBOSOMAL_S10"/>
    <property type="match status" value="1"/>
</dbReference>
<proteinExistence type="inferred from homology"/>
<comment type="function">
    <text evidence="1">Involved in the binding of tRNA to the ribosomes.</text>
</comment>
<comment type="subunit">
    <text evidence="1">Part of the 30S ribosomal subunit.</text>
</comment>
<comment type="similarity">
    <text evidence="1">Belongs to the universal ribosomal protein uS10 family.</text>
</comment>
<name>RS10_TREPA</name>
<protein>
    <recommendedName>
        <fullName evidence="1">Small ribosomal subunit protein uS10</fullName>
    </recommendedName>
    <alternativeName>
        <fullName evidence="2">30S ribosomal protein S10</fullName>
    </alternativeName>
</protein>
<sequence length="102" mass="11584">MARERIRVKLCGFDVELVDQSSRAIVHAVQKAGAEVLGPIPLPTRMHKFTVLRSPHVNKKSREQFEMRTHKRLIDIIEPSQEVMNALMGLELSAGVDVRIKQ</sequence>
<evidence type="ECO:0000255" key="1">
    <source>
        <dbReference type="HAMAP-Rule" id="MF_00508"/>
    </source>
</evidence>
<evidence type="ECO:0000305" key="2"/>
<gene>
    <name evidence="1" type="primary">rpsJ</name>
    <name type="ordered locus">TP_0188</name>
</gene>
<feature type="chain" id="PRO_0000146625" description="Small ribosomal subunit protein uS10">
    <location>
        <begin position="1"/>
        <end position="102"/>
    </location>
</feature>
<reference key="1">
    <citation type="journal article" date="1998" name="Science">
        <title>Complete genome sequence of Treponema pallidum, the syphilis spirochete.</title>
        <authorList>
            <person name="Fraser C.M."/>
            <person name="Norris S.J."/>
            <person name="Weinstock G.M."/>
            <person name="White O."/>
            <person name="Sutton G.G."/>
            <person name="Dodson R.J."/>
            <person name="Gwinn M.L."/>
            <person name="Hickey E.K."/>
            <person name="Clayton R.A."/>
            <person name="Ketchum K.A."/>
            <person name="Sodergren E."/>
            <person name="Hardham J.M."/>
            <person name="McLeod M.P."/>
            <person name="Salzberg S.L."/>
            <person name="Peterson J.D."/>
            <person name="Khalak H.G."/>
            <person name="Richardson D.L."/>
            <person name="Howell J.K."/>
            <person name="Chidambaram M."/>
            <person name="Utterback T.R."/>
            <person name="McDonald L.A."/>
            <person name="Artiach P."/>
            <person name="Bowman C."/>
            <person name="Cotton M.D."/>
            <person name="Fujii C."/>
            <person name="Garland S.A."/>
            <person name="Hatch B."/>
            <person name="Horst K."/>
            <person name="Roberts K.M."/>
            <person name="Sandusky M."/>
            <person name="Weidman J.F."/>
            <person name="Smith H.O."/>
            <person name="Venter J.C."/>
        </authorList>
    </citation>
    <scope>NUCLEOTIDE SEQUENCE [LARGE SCALE GENOMIC DNA]</scope>
    <source>
        <strain>Nichols</strain>
    </source>
</reference>